<evidence type="ECO:0000255" key="1">
    <source>
        <dbReference type="HAMAP-Rule" id="MF_01306"/>
    </source>
</evidence>
<evidence type="ECO:0000256" key="2">
    <source>
        <dbReference type="SAM" id="MobiDB-lite"/>
    </source>
</evidence>
<evidence type="ECO:0000305" key="3"/>
<proteinExistence type="inferred from homology"/>
<reference key="1">
    <citation type="journal article" date="2002" name="Genome Res.">
        <title>The genome of Methanosarcina acetivorans reveals extensive metabolic and physiological diversity.</title>
        <authorList>
            <person name="Galagan J.E."/>
            <person name="Nusbaum C."/>
            <person name="Roy A."/>
            <person name="Endrizzi M.G."/>
            <person name="Macdonald P."/>
            <person name="FitzHugh W."/>
            <person name="Calvo S."/>
            <person name="Engels R."/>
            <person name="Smirnov S."/>
            <person name="Atnoor D."/>
            <person name="Brown A."/>
            <person name="Allen N."/>
            <person name="Naylor J."/>
            <person name="Stange-Thomann N."/>
            <person name="DeArellano K."/>
            <person name="Johnson R."/>
            <person name="Linton L."/>
            <person name="McEwan P."/>
            <person name="McKernan K."/>
            <person name="Talamas J."/>
            <person name="Tirrell A."/>
            <person name="Ye W."/>
            <person name="Zimmer A."/>
            <person name="Barber R.D."/>
            <person name="Cann I."/>
            <person name="Graham D.E."/>
            <person name="Grahame D.A."/>
            <person name="Guss A.M."/>
            <person name="Hedderich R."/>
            <person name="Ingram-Smith C."/>
            <person name="Kuettner H.C."/>
            <person name="Krzycki J.A."/>
            <person name="Leigh J.A."/>
            <person name="Li W."/>
            <person name="Liu J."/>
            <person name="Mukhopadhyay B."/>
            <person name="Reeve J.N."/>
            <person name="Smith K."/>
            <person name="Springer T.A."/>
            <person name="Umayam L.A."/>
            <person name="White O."/>
            <person name="White R.H."/>
            <person name="de Macario E.C."/>
            <person name="Ferry J.G."/>
            <person name="Jarrell K.F."/>
            <person name="Jing H."/>
            <person name="Macario A.J.L."/>
            <person name="Paulsen I.T."/>
            <person name="Pritchett M."/>
            <person name="Sowers K.R."/>
            <person name="Swanson R.V."/>
            <person name="Zinder S.H."/>
            <person name="Lander E."/>
            <person name="Metcalf W.W."/>
            <person name="Birren B."/>
        </authorList>
    </citation>
    <scope>NUCLEOTIDE SEQUENCE [LARGE SCALE GENOMIC DNA]</scope>
    <source>
        <strain>ATCC 35395 / DSM 2834 / JCM 12185 / C2A</strain>
    </source>
</reference>
<sequence length="218" mass="24512">MAYPGKKSKSYETPKHPWQEARMATEVQLVKAYGLRNKKEVWKAASMLRMYRSEARKLLAHVASGQEGGLEGHYRTQSEEILSKLIRYGIIKSDANIDDILSLKTENILERRLQTQVLRLGLARTVIQARQFITHGHIAINGRKATIPGMLVSKEDEMHIGYYGNSPLKNESHPERPVQVASFLADSGTTLKAAAEAKQAREKPPERGGGRRKRGGRR</sequence>
<feature type="chain" id="PRO_0000132507" description="Small ribosomal subunit protein uS4">
    <location>
        <begin position="1"/>
        <end position="218"/>
    </location>
</feature>
<feature type="domain" description="S4 RNA-binding" evidence="1">
    <location>
        <begin position="111"/>
        <end position="175"/>
    </location>
</feature>
<feature type="region of interest" description="Disordered" evidence="2">
    <location>
        <begin position="192"/>
        <end position="218"/>
    </location>
</feature>
<feature type="compositionally biased region" description="Basic and acidic residues" evidence="2">
    <location>
        <begin position="198"/>
        <end position="209"/>
    </location>
</feature>
<organism>
    <name type="scientific">Methanosarcina acetivorans (strain ATCC 35395 / DSM 2834 / JCM 12185 / C2A)</name>
    <dbReference type="NCBI Taxonomy" id="188937"/>
    <lineage>
        <taxon>Archaea</taxon>
        <taxon>Methanobacteriati</taxon>
        <taxon>Methanobacteriota</taxon>
        <taxon>Stenosarchaea group</taxon>
        <taxon>Methanomicrobia</taxon>
        <taxon>Methanosarcinales</taxon>
        <taxon>Methanosarcinaceae</taxon>
        <taxon>Methanosarcina</taxon>
    </lineage>
</organism>
<dbReference type="EMBL" id="AE010299">
    <property type="protein sequence ID" value="AAM04533.1"/>
    <property type="molecule type" value="Genomic_DNA"/>
</dbReference>
<dbReference type="RefSeq" id="WP_011021137.1">
    <property type="nucleotide sequence ID" value="NC_003552.1"/>
</dbReference>
<dbReference type="SMR" id="Q8TRR1"/>
<dbReference type="FunCoup" id="Q8TRR1">
    <property type="interactions" value="183"/>
</dbReference>
<dbReference type="STRING" id="188937.MA_1109"/>
<dbReference type="EnsemblBacteria" id="AAM04533">
    <property type="protein sequence ID" value="AAM04533"/>
    <property type="gene ID" value="MA_1109"/>
</dbReference>
<dbReference type="GeneID" id="1472998"/>
<dbReference type="KEGG" id="mac:MA_1109"/>
<dbReference type="HOGENOM" id="CLU_089738_1_1_2"/>
<dbReference type="InParanoid" id="Q8TRR1"/>
<dbReference type="OrthoDB" id="10429at2157"/>
<dbReference type="PhylomeDB" id="Q8TRR1"/>
<dbReference type="Proteomes" id="UP000002487">
    <property type="component" value="Chromosome"/>
</dbReference>
<dbReference type="GO" id="GO:0015935">
    <property type="term" value="C:small ribosomal subunit"/>
    <property type="evidence" value="ECO:0000318"/>
    <property type="project" value="GO_Central"/>
</dbReference>
<dbReference type="GO" id="GO:0019843">
    <property type="term" value="F:rRNA binding"/>
    <property type="evidence" value="ECO:0000318"/>
    <property type="project" value="GO_Central"/>
</dbReference>
<dbReference type="GO" id="GO:0003735">
    <property type="term" value="F:structural constituent of ribosome"/>
    <property type="evidence" value="ECO:0000318"/>
    <property type="project" value="GO_Central"/>
</dbReference>
<dbReference type="GO" id="GO:0042274">
    <property type="term" value="P:ribosomal small subunit biogenesis"/>
    <property type="evidence" value="ECO:0000318"/>
    <property type="project" value="GO_Central"/>
</dbReference>
<dbReference type="GO" id="GO:0006412">
    <property type="term" value="P:translation"/>
    <property type="evidence" value="ECO:0007669"/>
    <property type="project" value="UniProtKB-UniRule"/>
</dbReference>
<dbReference type="CDD" id="cd00165">
    <property type="entry name" value="S4"/>
    <property type="match status" value="1"/>
</dbReference>
<dbReference type="FunFam" id="3.10.290.10:FF:000026">
    <property type="entry name" value="30S ribosomal protein S4"/>
    <property type="match status" value="1"/>
</dbReference>
<dbReference type="Gene3D" id="3.10.290.10">
    <property type="entry name" value="RNA-binding S4 domain"/>
    <property type="match status" value="1"/>
</dbReference>
<dbReference type="HAMAP" id="MF_01306_A">
    <property type="entry name" value="Ribosomal_uS4_A"/>
    <property type="match status" value="1"/>
</dbReference>
<dbReference type="InterPro" id="IPR022801">
    <property type="entry name" value="Ribosomal_uS4"/>
</dbReference>
<dbReference type="InterPro" id="IPR022802">
    <property type="entry name" value="Ribosomal_uS4_arc"/>
</dbReference>
<dbReference type="InterPro" id="IPR018079">
    <property type="entry name" value="Ribosomal_uS4_CS"/>
</dbReference>
<dbReference type="InterPro" id="IPR005710">
    <property type="entry name" value="Ribosomal_uS4_euk/arc"/>
</dbReference>
<dbReference type="InterPro" id="IPR001912">
    <property type="entry name" value="Ribosomal_uS4_N"/>
</dbReference>
<dbReference type="InterPro" id="IPR002942">
    <property type="entry name" value="S4_RNA-bd"/>
</dbReference>
<dbReference type="InterPro" id="IPR036986">
    <property type="entry name" value="S4_RNA-bd_sf"/>
</dbReference>
<dbReference type="NCBIfam" id="NF003139">
    <property type="entry name" value="PRK04051.1"/>
    <property type="match status" value="1"/>
</dbReference>
<dbReference type="NCBIfam" id="TIGR01018">
    <property type="entry name" value="uS4_arch"/>
    <property type="match status" value="1"/>
</dbReference>
<dbReference type="PANTHER" id="PTHR11831">
    <property type="entry name" value="30S 40S RIBOSOMAL PROTEIN"/>
    <property type="match status" value="1"/>
</dbReference>
<dbReference type="PANTHER" id="PTHR11831:SF5">
    <property type="entry name" value="40S RIBOSOMAL PROTEIN S9"/>
    <property type="match status" value="1"/>
</dbReference>
<dbReference type="Pfam" id="PF01479">
    <property type="entry name" value="S4"/>
    <property type="match status" value="1"/>
</dbReference>
<dbReference type="SMART" id="SM01390">
    <property type="entry name" value="Ribosomal_S4"/>
    <property type="match status" value="1"/>
</dbReference>
<dbReference type="SMART" id="SM00363">
    <property type="entry name" value="S4"/>
    <property type="match status" value="1"/>
</dbReference>
<dbReference type="SUPFAM" id="SSF55174">
    <property type="entry name" value="Alpha-L RNA-binding motif"/>
    <property type="match status" value="1"/>
</dbReference>
<dbReference type="PROSITE" id="PS00632">
    <property type="entry name" value="RIBOSOMAL_S4"/>
    <property type="match status" value="1"/>
</dbReference>
<dbReference type="PROSITE" id="PS50889">
    <property type="entry name" value="S4"/>
    <property type="match status" value="1"/>
</dbReference>
<comment type="function">
    <text evidence="1">One of the primary rRNA binding proteins, it binds directly to 16S rRNA where it nucleates assembly of the body of the 30S subunit.</text>
</comment>
<comment type="function">
    <text evidence="1">With S5 and S12 plays an important role in translational accuracy.</text>
</comment>
<comment type="subunit">
    <text evidence="1">Part of the 30S ribosomal subunit. Contacts protein S5. The interaction surface between S4 and S5 is involved in control of translational fidelity.</text>
</comment>
<comment type="similarity">
    <text evidence="1">Belongs to the universal ribosomal protein uS4 family.</text>
</comment>
<protein>
    <recommendedName>
        <fullName evidence="1">Small ribosomal subunit protein uS4</fullName>
    </recommendedName>
    <alternativeName>
        <fullName evidence="3">30S ribosomal protein S4</fullName>
    </alternativeName>
</protein>
<gene>
    <name evidence="1" type="primary">rps4</name>
    <name type="ordered locus">MA_1109</name>
</gene>
<keyword id="KW-1185">Reference proteome</keyword>
<keyword id="KW-0687">Ribonucleoprotein</keyword>
<keyword id="KW-0689">Ribosomal protein</keyword>
<keyword id="KW-0694">RNA-binding</keyword>
<keyword id="KW-0699">rRNA-binding</keyword>
<name>RS4_METAC</name>
<accession>Q8TRR1</accession>